<sequence>MAAAPEPHETEKKPFKLLGILDVENTPCARESILYGSLGSIVTGLGHFLVTSRIRRSCDVGVGGFILVTLGCWFHCRYNFAKQRIQERIAREGIKNKILYESTHLDPERKMKTNNSS</sequence>
<gene>
    <name type="primary">Cox20</name>
    <name type="synonym">Fam36a</name>
</gene>
<proteinExistence type="evidence at protein level"/>
<comment type="function">
    <text evidence="1">Essential for the assembly of the mitochondrial respiratory chain complex IV (CIV), also known as cytochrome c oxidase. Acts as a chaperone in the early steps of cytochrome c oxidase subunit II (MT-CO2/COX2) maturation, stabilizing the newly synthesized protein and presenting it to metallochaperones SCO1/2 which in turn facilitates the incorporation of the mature MT-CO2/COX2 into the assembling CIV holoenzyme.</text>
</comment>
<comment type="subunit">
    <text evidence="1">Found in a complex with TMEM177, COA6, MT-CO2/COX2, COX18, SCO1 and SCO2. Interacts with SCO1, SCO2 and COA6 in a MT-CO2/COX2- and COX18-dependent manner. Interacts with COX18 in a MT-CO2/COX2-dependent manner. Interacts with MT-CO2/COX2 and TMEM177.</text>
</comment>
<comment type="subcellular location">
    <subcellularLocation>
        <location evidence="1">Mitochondrion inner membrane</location>
        <topology evidence="2">Multi-pass membrane protein</topology>
    </subcellularLocation>
</comment>
<comment type="similarity">
    <text evidence="3">Belongs to the COX20 family.</text>
</comment>
<name>COX20_MOUSE</name>
<protein>
    <recommendedName>
        <fullName>Cytochrome c oxidase assembly protein COX20, mitochondrial</fullName>
    </recommendedName>
</protein>
<accession>Q9D7J4</accession>
<accession>Q8BT52</accession>
<feature type="initiator methionine" description="Removed" evidence="1">
    <location>
        <position position="1"/>
    </location>
</feature>
<feature type="chain" id="PRO_0000186816" description="Cytochrome c oxidase assembly protein COX20, mitochondrial">
    <location>
        <begin position="2"/>
        <end position="117"/>
    </location>
</feature>
<feature type="topological domain" description="Mitochondrial intermembrane" evidence="3">
    <location>
        <begin position="2"/>
        <end position="32"/>
    </location>
</feature>
<feature type="transmembrane region" description="Helical" evidence="2">
    <location>
        <begin position="33"/>
        <end position="50"/>
    </location>
</feature>
<feature type="topological domain" description="Mitochondrial matrix" evidence="3">
    <location>
        <begin position="51"/>
        <end position="59"/>
    </location>
</feature>
<feature type="transmembrane region" description="Helical" evidence="2">
    <location>
        <begin position="60"/>
        <end position="76"/>
    </location>
</feature>
<feature type="topological domain" description="Mitochondrial intermembrane" evidence="3">
    <location>
        <begin position="77"/>
        <end position="117"/>
    </location>
</feature>
<feature type="modified residue" description="N-acetylalanine" evidence="1">
    <location>
        <position position="2"/>
    </location>
</feature>
<reference key="1">
    <citation type="journal article" date="2005" name="Science">
        <title>The transcriptional landscape of the mammalian genome.</title>
        <authorList>
            <person name="Carninci P."/>
            <person name="Kasukawa T."/>
            <person name="Katayama S."/>
            <person name="Gough J."/>
            <person name="Frith M.C."/>
            <person name="Maeda N."/>
            <person name="Oyama R."/>
            <person name="Ravasi T."/>
            <person name="Lenhard B."/>
            <person name="Wells C."/>
            <person name="Kodzius R."/>
            <person name="Shimokawa K."/>
            <person name="Bajic V.B."/>
            <person name="Brenner S.E."/>
            <person name="Batalov S."/>
            <person name="Forrest A.R."/>
            <person name="Zavolan M."/>
            <person name="Davis M.J."/>
            <person name="Wilming L.G."/>
            <person name="Aidinis V."/>
            <person name="Allen J.E."/>
            <person name="Ambesi-Impiombato A."/>
            <person name="Apweiler R."/>
            <person name="Aturaliya R.N."/>
            <person name="Bailey T.L."/>
            <person name="Bansal M."/>
            <person name="Baxter L."/>
            <person name="Beisel K.W."/>
            <person name="Bersano T."/>
            <person name="Bono H."/>
            <person name="Chalk A.M."/>
            <person name="Chiu K.P."/>
            <person name="Choudhary V."/>
            <person name="Christoffels A."/>
            <person name="Clutterbuck D.R."/>
            <person name="Crowe M.L."/>
            <person name="Dalla E."/>
            <person name="Dalrymple B.P."/>
            <person name="de Bono B."/>
            <person name="Della Gatta G."/>
            <person name="di Bernardo D."/>
            <person name="Down T."/>
            <person name="Engstrom P."/>
            <person name="Fagiolini M."/>
            <person name="Faulkner G."/>
            <person name="Fletcher C.F."/>
            <person name="Fukushima T."/>
            <person name="Furuno M."/>
            <person name="Futaki S."/>
            <person name="Gariboldi M."/>
            <person name="Georgii-Hemming P."/>
            <person name="Gingeras T.R."/>
            <person name="Gojobori T."/>
            <person name="Green R.E."/>
            <person name="Gustincich S."/>
            <person name="Harbers M."/>
            <person name="Hayashi Y."/>
            <person name="Hensch T.K."/>
            <person name="Hirokawa N."/>
            <person name="Hill D."/>
            <person name="Huminiecki L."/>
            <person name="Iacono M."/>
            <person name="Ikeo K."/>
            <person name="Iwama A."/>
            <person name="Ishikawa T."/>
            <person name="Jakt M."/>
            <person name="Kanapin A."/>
            <person name="Katoh M."/>
            <person name="Kawasawa Y."/>
            <person name="Kelso J."/>
            <person name="Kitamura H."/>
            <person name="Kitano H."/>
            <person name="Kollias G."/>
            <person name="Krishnan S.P."/>
            <person name="Kruger A."/>
            <person name="Kummerfeld S.K."/>
            <person name="Kurochkin I.V."/>
            <person name="Lareau L.F."/>
            <person name="Lazarevic D."/>
            <person name="Lipovich L."/>
            <person name="Liu J."/>
            <person name="Liuni S."/>
            <person name="McWilliam S."/>
            <person name="Madan Babu M."/>
            <person name="Madera M."/>
            <person name="Marchionni L."/>
            <person name="Matsuda H."/>
            <person name="Matsuzawa S."/>
            <person name="Miki H."/>
            <person name="Mignone F."/>
            <person name="Miyake S."/>
            <person name="Morris K."/>
            <person name="Mottagui-Tabar S."/>
            <person name="Mulder N."/>
            <person name="Nakano N."/>
            <person name="Nakauchi H."/>
            <person name="Ng P."/>
            <person name="Nilsson R."/>
            <person name="Nishiguchi S."/>
            <person name="Nishikawa S."/>
            <person name="Nori F."/>
            <person name="Ohara O."/>
            <person name="Okazaki Y."/>
            <person name="Orlando V."/>
            <person name="Pang K.C."/>
            <person name="Pavan W.J."/>
            <person name="Pavesi G."/>
            <person name="Pesole G."/>
            <person name="Petrovsky N."/>
            <person name="Piazza S."/>
            <person name="Reed J."/>
            <person name="Reid J.F."/>
            <person name="Ring B.Z."/>
            <person name="Ringwald M."/>
            <person name="Rost B."/>
            <person name="Ruan Y."/>
            <person name="Salzberg S.L."/>
            <person name="Sandelin A."/>
            <person name="Schneider C."/>
            <person name="Schoenbach C."/>
            <person name="Sekiguchi K."/>
            <person name="Semple C.A."/>
            <person name="Seno S."/>
            <person name="Sessa L."/>
            <person name="Sheng Y."/>
            <person name="Shibata Y."/>
            <person name="Shimada H."/>
            <person name="Shimada K."/>
            <person name="Silva D."/>
            <person name="Sinclair B."/>
            <person name="Sperling S."/>
            <person name="Stupka E."/>
            <person name="Sugiura K."/>
            <person name="Sultana R."/>
            <person name="Takenaka Y."/>
            <person name="Taki K."/>
            <person name="Tammoja K."/>
            <person name="Tan S.L."/>
            <person name="Tang S."/>
            <person name="Taylor M.S."/>
            <person name="Tegner J."/>
            <person name="Teichmann S.A."/>
            <person name="Ueda H.R."/>
            <person name="van Nimwegen E."/>
            <person name="Verardo R."/>
            <person name="Wei C.L."/>
            <person name="Yagi K."/>
            <person name="Yamanishi H."/>
            <person name="Zabarovsky E."/>
            <person name="Zhu S."/>
            <person name="Zimmer A."/>
            <person name="Hide W."/>
            <person name="Bult C."/>
            <person name="Grimmond S.M."/>
            <person name="Teasdale R.D."/>
            <person name="Liu E.T."/>
            <person name="Brusic V."/>
            <person name="Quackenbush J."/>
            <person name="Wahlestedt C."/>
            <person name="Mattick J.S."/>
            <person name="Hume D.A."/>
            <person name="Kai C."/>
            <person name="Sasaki D."/>
            <person name="Tomaru Y."/>
            <person name="Fukuda S."/>
            <person name="Kanamori-Katayama M."/>
            <person name="Suzuki M."/>
            <person name="Aoki J."/>
            <person name="Arakawa T."/>
            <person name="Iida J."/>
            <person name="Imamura K."/>
            <person name="Itoh M."/>
            <person name="Kato T."/>
            <person name="Kawaji H."/>
            <person name="Kawagashira N."/>
            <person name="Kawashima T."/>
            <person name="Kojima M."/>
            <person name="Kondo S."/>
            <person name="Konno H."/>
            <person name="Nakano K."/>
            <person name="Ninomiya N."/>
            <person name="Nishio T."/>
            <person name="Okada M."/>
            <person name="Plessy C."/>
            <person name="Shibata K."/>
            <person name="Shiraki T."/>
            <person name="Suzuki S."/>
            <person name="Tagami M."/>
            <person name="Waki K."/>
            <person name="Watahiki A."/>
            <person name="Okamura-Oho Y."/>
            <person name="Suzuki H."/>
            <person name="Kawai J."/>
            <person name="Hayashizaki Y."/>
        </authorList>
    </citation>
    <scope>NUCLEOTIDE SEQUENCE [LARGE SCALE MRNA]</scope>
</reference>
<reference key="2">
    <citation type="journal article" date="2004" name="Genome Res.">
        <title>The status, quality, and expansion of the NIH full-length cDNA project: the Mammalian Gene Collection (MGC).</title>
        <authorList>
            <consortium name="The MGC Project Team"/>
        </authorList>
    </citation>
    <scope>NUCLEOTIDE SEQUENCE [LARGE SCALE MRNA]</scope>
    <source>
        <strain>C57BL/6J</strain>
        <tissue>Brain</tissue>
    </source>
</reference>
<reference key="3">
    <citation type="journal article" date="2010" name="Cell">
        <title>A tissue-specific atlas of mouse protein phosphorylation and expression.</title>
        <authorList>
            <person name="Huttlin E.L."/>
            <person name="Jedrychowski M.P."/>
            <person name="Elias J.E."/>
            <person name="Goswami T."/>
            <person name="Rad R."/>
            <person name="Beausoleil S.A."/>
            <person name="Villen J."/>
            <person name="Haas W."/>
            <person name="Sowa M.E."/>
            <person name="Gygi S.P."/>
        </authorList>
    </citation>
    <scope>IDENTIFICATION BY MASS SPECTROMETRY [LARGE SCALE ANALYSIS]</scope>
    <source>
        <tissue>Brown adipose tissue</tissue>
        <tissue>Heart</tissue>
        <tissue>Testis</tissue>
    </source>
</reference>
<evidence type="ECO:0000250" key="1">
    <source>
        <dbReference type="UniProtKB" id="Q5RI15"/>
    </source>
</evidence>
<evidence type="ECO:0000255" key="2"/>
<evidence type="ECO:0000305" key="3"/>
<dbReference type="EMBL" id="AK009178">
    <property type="protein sequence ID" value="BAB26124.1"/>
    <property type="molecule type" value="mRNA"/>
</dbReference>
<dbReference type="EMBL" id="AK019293">
    <property type="protein sequence ID" value="BAC25589.1"/>
    <property type="molecule type" value="mRNA"/>
</dbReference>
<dbReference type="EMBL" id="BC055277">
    <property type="protein sequence ID" value="AAH55277.1"/>
    <property type="molecule type" value="mRNA"/>
</dbReference>
<dbReference type="EMBL" id="BC059717">
    <property type="protein sequence ID" value="AAH59717.1"/>
    <property type="molecule type" value="mRNA"/>
</dbReference>
<dbReference type="CCDS" id="CCDS15556.1"/>
<dbReference type="RefSeq" id="NP_079787.1">
    <property type="nucleotide sequence ID" value="NM_025511.2"/>
</dbReference>
<dbReference type="SMR" id="Q9D7J4"/>
<dbReference type="FunCoup" id="Q9D7J4">
    <property type="interactions" value="946"/>
</dbReference>
<dbReference type="STRING" id="10090.ENSMUSP00000027781"/>
<dbReference type="iPTMnet" id="Q9D7J4"/>
<dbReference type="PhosphoSitePlus" id="Q9D7J4"/>
<dbReference type="SwissPalm" id="Q9D7J4"/>
<dbReference type="jPOST" id="Q9D7J4"/>
<dbReference type="PaxDb" id="10090-ENSMUSP00000027781"/>
<dbReference type="PeptideAtlas" id="Q9D7J4"/>
<dbReference type="ProteomicsDB" id="283795"/>
<dbReference type="Pumba" id="Q9D7J4"/>
<dbReference type="Antibodypedia" id="34716">
    <property type="antibodies" value="72 antibodies from 16 providers"/>
</dbReference>
<dbReference type="DNASU" id="66359"/>
<dbReference type="Ensembl" id="ENSMUST00000027781.7">
    <property type="protein sequence ID" value="ENSMUSP00000027781.7"/>
    <property type="gene ID" value="ENSMUSG00000026500.7"/>
</dbReference>
<dbReference type="GeneID" id="66359"/>
<dbReference type="KEGG" id="mmu:66359"/>
<dbReference type="UCSC" id="uc007duz.1">
    <property type="organism name" value="mouse"/>
</dbReference>
<dbReference type="AGR" id="MGI:1913609"/>
<dbReference type="CTD" id="116228"/>
<dbReference type="MGI" id="MGI:1913609">
    <property type="gene designation" value="Cox20"/>
</dbReference>
<dbReference type="VEuPathDB" id="HostDB:ENSMUSG00000026500"/>
<dbReference type="eggNOG" id="ENOG502S3BD">
    <property type="taxonomic scope" value="Eukaryota"/>
</dbReference>
<dbReference type="GeneTree" id="ENSGT00390000016158"/>
<dbReference type="HOGENOM" id="CLU_101495_1_1_1"/>
<dbReference type="InParanoid" id="Q9D7J4"/>
<dbReference type="OMA" id="VSQIPCF"/>
<dbReference type="OrthoDB" id="14603at2759"/>
<dbReference type="PhylomeDB" id="Q9D7J4"/>
<dbReference type="TreeFam" id="TF323844"/>
<dbReference type="Reactome" id="R-MMU-9864848">
    <property type="pathway name" value="Complex IV assembly"/>
</dbReference>
<dbReference type="BioGRID-ORCS" id="66359">
    <property type="hits" value="22 hits in 77 CRISPR screens"/>
</dbReference>
<dbReference type="ChiTaRS" id="Cox20">
    <property type="organism name" value="mouse"/>
</dbReference>
<dbReference type="PRO" id="PR:Q9D7J4"/>
<dbReference type="Proteomes" id="UP000000589">
    <property type="component" value="Chromosome 1"/>
</dbReference>
<dbReference type="RNAct" id="Q9D7J4">
    <property type="molecule type" value="protein"/>
</dbReference>
<dbReference type="Bgee" id="ENSMUSG00000026500">
    <property type="expression patterns" value="Expressed in proximal tubule and 65 other cell types or tissues"/>
</dbReference>
<dbReference type="GO" id="GO:0005743">
    <property type="term" value="C:mitochondrial inner membrane"/>
    <property type="evidence" value="ECO:0000250"/>
    <property type="project" value="UniProtKB"/>
</dbReference>
<dbReference type="GO" id="GO:0005739">
    <property type="term" value="C:mitochondrion"/>
    <property type="evidence" value="ECO:0007005"/>
    <property type="project" value="MGI"/>
</dbReference>
<dbReference type="GO" id="GO:0033617">
    <property type="term" value="P:mitochondrial cytochrome c oxidase assembly"/>
    <property type="evidence" value="ECO:0000250"/>
    <property type="project" value="UniProtKB"/>
</dbReference>
<dbReference type="InterPro" id="IPR022533">
    <property type="entry name" value="Cox20"/>
</dbReference>
<dbReference type="PANTHER" id="PTHR31586:SF1">
    <property type="entry name" value="CYTOCHROME C OXIDASE ASSEMBLY PROTEIN COX20, MITOCHONDRIAL"/>
    <property type="match status" value="1"/>
</dbReference>
<dbReference type="PANTHER" id="PTHR31586">
    <property type="entry name" value="CYTOCHROME C OXIDASE PROTEIN 20"/>
    <property type="match status" value="1"/>
</dbReference>
<dbReference type="Pfam" id="PF12597">
    <property type="entry name" value="Cox20"/>
    <property type="match status" value="1"/>
</dbReference>
<dbReference type="PRINTS" id="PR02049">
    <property type="entry name" value="PROTEINF36A"/>
</dbReference>
<keyword id="KW-0007">Acetylation</keyword>
<keyword id="KW-0472">Membrane</keyword>
<keyword id="KW-0496">Mitochondrion</keyword>
<keyword id="KW-0999">Mitochondrion inner membrane</keyword>
<keyword id="KW-1185">Reference proteome</keyword>
<keyword id="KW-0812">Transmembrane</keyword>
<keyword id="KW-1133">Transmembrane helix</keyword>
<organism>
    <name type="scientific">Mus musculus</name>
    <name type="common">Mouse</name>
    <dbReference type="NCBI Taxonomy" id="10090"/>
    <lineage>
        <taxon>Eukaryota</taxon>
        <taxon>Metazoa</taxon>
        <taxon>Chordata</taxon>
        <taxon>Craniata</taxon>
        <taxon>Vertebrata</taxon>
        <taxon>Euteleostomi</taxon>
        <taxon>Mammalia</taxon>
        <taxon>Eutheria</taxon>
        <taxon>Euarchontoglires</taxon>
        <taxon>Glires</taxon>
        <taxon>Rodentia</taxon>
        <taxon>Myomorpha</taxon>
        <taxon>Muroidea</taxon>
        <taxon>Muridae</taxon>
        <taxon>Murinae</taxon>
        <taxon>Mus</taxon>
        <taxon>Mus</taxon>
    </lineage>
</organism>